<keyword id="KW-0021">Allosteric enzyme</keyword>
<keyword id="KW-0067">ATP-binding</keyword>
<keyword id="KW-0963">Cytoplasm</keyword>
<keyword id="KW-0418">Kinase</keyword>
<keyword id="KW-0547">Nucleotide-binding</keyword>
<keyword id="KW-0665">Pyrimidine biosynthesis</keyword>
<keyword id="KW-1185">Reference proteome</keyword>
<keyword id="KW-0808">Transferase</keyword>
<name>PYRH_STAA8</name>
<evidence type="ECO:0000250" key="1"/>
<evidence type="ECO:0000255" key="2"/>
<evidence type="ECO:0000269" key="3">
    <source>
    </source>
</evidence>
<evidence type="ECO:0000305" key="4"/>
<comment type="function">
    <text evidence="3">Catalyzes the reversible phosphorylation of UMP to UDP.</text>
</comment>
<comment type="catalytic activity">
    <reaction>
        <text>UMP + ATP = UDP + ADP</text>
        <dbReference type="Rhea" id="RHEA:24400"/>
        <dbReference type="ChEBI" id="CHEBI:30616"/>
        <dbReference type="ChEBI" id="CHEBI:57865"/>
        <dbReference type="ChEBI" id="CHEBI:58223"/>
        <dbReference type="ChEBI" id="CHEBI:456216"/>
        <dbReference type="EC" id="2.7.4.22"/>
    </reaction>
</comment>
<comment type="activity regulation">
    <text evidence="3">Allosterically activated by GTP. Probably inhibited by UTP.</text>
</comment>
<comment type="biophysicochemical properties">
    <kinetics>
        <Vmax evidence="3">39.0 umol/min/mg enzyme</Vmax>
        <text>Positive cooperativity is observed with ATP as variable substrate, but it is strongly reduced in the presence of GTP. GTP enhances the affinity for ATP.</text>
    </kinetics>
</comment>
<comment type="pathway">
    <text>Pyrimidine metabolism; CTP biosynthesis via de novo pathway; UDP from UMP (UMPK route): step 1/1.</text>
</comment>
<comment type="subunit">
    <text evidence="3">Homohexamer.</text>
</comment>
<comment type="subcellular location">
    <subcellularLocation>
        <location evidence="1">Cytoplasm</location>
    </subcellularLocation>
</comment>
<comment type="similarity">
    <text evidence="4">Belongs to the UMP kinase family.</text>
</comment>
<dbReference type="EC" id="2.7.4.22"/>
<dbReference type="EMBL" id="CP000253">
    <property type="protein sequence ID" value="ABD30336.1"/>
    <property type="molecule type" value="Genomic_DNA"/>
</dbReference>
<dbReference type="RefSeq" id="WP_000057330.1">
    <property type="nucleotide sequence ID" value="NZ_LS483365.1"/>
</dbReference>
<dbReference type="RefSeq" id="YP_499768.1">
    <property type="nucleotide sequence ID" value="NC_007795.1"/>
</dbReference>
<dbReference type="SMR" id="Q2FZ22"/>
<dbReference type="STRING" id="93061.SAOUHSC_01235"/>
<dbReference type="PaxDb" id="1280-SAXN108_1260"/>
<dbReference type="GeneID" id="3920260"/>
<dbReference type="GeneID" id="98345574"/>
<dbReference type="KEGG" id="sao:SAOUHSC_01235"/>
<dbReference type="PATRIC" id="fig|93061.5.peg.1129"/>
<dbReference type="eggNOG" id="COG0528">
    <property type="taxonomic scope" value="Bacteria"/>
</dbReference>
<dbReference type="HOGENOM" id="CLU_033861_0_0_9"/>
<dbReference type="OrthoDB" id="9807458at2"/>
<dbReference type="SABIO-RK" id="Q2FZ22"/>
<dbReference type="UniPathway" id="UPA00159">
    <property type="reaction ID" value="UER00275"/>
</dbReference>
<dbReference type="PRO" id="PR:Q2FZ22"/>
<dbReference type="Proteomes" id="UP000008816">
    <property type="component" value="Chromosome"/>
</dbReference>
<dbReference type="GO" id="GO:0005737">
    <property type="term" value="C:cytoplasm"/>
    <property type="evidence" value="ECO:0007669"/>
    <property type="project" value="UniProtKB-SubCell"/>
</dbReference>
<dbReference type="GO" id="GO:0005524">
    <property type="term" value="F:ATP binding"/>
    <property type="evidence" value="ECO:0007669"/>
    <property type="project" value="UniProtKB-KW"/>
</dbReference>
<dbReference type="GO" id="GO:0033862">
    <property type="term" value="F:UMP kinase activity"/>
    <property type="evidence" value="ECO:0000318"/>
    <property type="project" value="GO_Central"/>
</dbReference>
<dbReference type="GO" id="GO:0044210">
    <property type="term" value="P:'de novo' CTP biosynthetic process"/>
    <property type="evidence" value="ECO:0007669"/>
    <property type="project" value="UniProtKB-UniRule"/>
</dbReference>
<dbReference type="GO" id="GO:0006225">
    <property type="term" value="P:UDP biosynthetic process"/>
    <property type="evidence" value="ECO:0000318"/>
    <property type="project" value="GO_Central"/>
</dbReference>
<dbReference type="CDD" id="cd04254">
    <property type="entry name" value="AAK_UMPK-PyrH-Ec"/>
    <property type="match status" value="1"/>
</dbReference>
<dbReference type="FunFam" id="3.40.1160.10:FF:000001">
    <property type="entry name" value="Uridylate kinase"/>
    <property type="match status" value="1"/>
</dbReference>
<dbReference type="Gene3D" id="3.40.1160.10">
    <property type="entry name" value="Acetylglutamate kinase-like"/>
    <property type="match status" value="1"/>
</dbReference>
<dbReference type="HAMAP" id="MF_01220_B">
    <property type="entry name" value="PyrH_B"/>
    <property type="match status" value="1"/>
</dbReference>
<dbReference type="InterPro" id="IPR036393">
    <property type="entry name" value="AceGlu_kinase-like_sf"/>
</dbReference>
<dbReference type="InterPro" id="IPR001048">
    <property type="entry name" value="Asp/Glu/Uridylate_kinase"/>
</dbReference>
<dbReference type="InterPro" id="IPR011817">
    <property type="entry name" value="Uridylate_kinase"/>
</dbReference>
<dbReference type="InterPro" id="IPR015963">
    <property type="entry name" value="Uridylate_kinase_bac"/>
</dbReference>
<dbReference type="NCBIfam" id="TIGR02075">
    <property type="entry name" value="pyrH_bact"/>
    <property type="match status" value="1"/>
</dbReference>
<dbReference type="PANTHER" id="PTHR42833">
    <property type="entry name" value="URIDYLATE KINASE"/>
    <property type="match status" value="1"/>
</dbReference>
<dbReference type="PANTHER" id="PTHR42833:SF4">
    <property type="entry name" value="URIDYLATE KINASE PUMPKIN, CHLOROPLASTIC"/>
    <property type="match status" value="1"/>
</dbReference>
<dbReference type="Pfam" id="PF00696">
    <property type="entry name" value="AA_kinase"/>
    <property type="match status" value="1"/>
</dbReference>
<dbReference type="PIRSF" id="PIRSF005650">
    <property type="entry name" value="Uridylate_kin"/>
    <property type="match status" value="1"/>
</dbReference>
<dbReference type="SUPFAM" id="SSF53633">
    <property type="entry name" value="Carbamate kinase-like"/>
    <property type="match status" value="1"/>
</dbReference>
<sequence length="240" mass="26145">MAQISKYKRVVLKLSGEALAGEKGFGINPVIIKSVAEQVAEVAKMDCEIAVIVGGGNIWRGKTGSDLGMDRGTADYMGMLATVMNALALQDSLEQLDCDTRVLTSIEMKQVAEPYIRRRAIRHLEKKRVVIFAAGIGNPYFSTDTTAALRAAEVEADVILMGKNNVDGVYSADPKVNKDAVKYEHLTHIQMLQEGLQVMDSTASSFCMDNNIPLTVFSIMEEGNIKRAVMGEKIGTLITK</sequence>
<protein>
    <recommendedName>
        <fullName>Uridylate kinase</fullName>
        <shortName>UK</shortName>
        <ecNumber>2.7.4.22</ecNumber>
    </recommendedName>
    <alternativeName>
        <fullName>Uridine monophosphate kinase</fullName>
        <shortName>UMP kinase</shortName>
        <shortName>UMPK</shortName>
    </alternativeName>
</protein>
<gene>
    <name type="primary">pyrH</name>
    <name type="ordered locus">SAOUHSC_01235</name>
</gene>
<feature type="chain" id="PRO_1000054025" description="Uridylate kinase">
    <location>
        <begin position="1"/>
        <end position="240"/>
    </location>
</feature>
<feature type="region of interest" description="Involved in allosteric activation by GTP" evidence="2">
    <location>
        <begin position="21"/>
        <end position="26"/>
    </location>
</feature>
<feature type="binding site" evidence="1">
    <location>
        <begin position="13"/>
        <end position="16"/>
    </location>
    <ligand>
        <name>ATP</name>
        <dbReference type="ChEBI" id="CHEBI:30616"/>
    </ligand>
</feature>
<feature type="binding site" evidence="1">
    <location>
        <position position="55"/>
    </location>
    <ligand>
        <name>UMP</name>
        <dbReference type="ChEBI" id="CHEBI:57865"/>
    </ligand>
</feature>
<feature type="binding site" evidence="1">
    <location>
        <position position="56"/>
    </location>
    <ligand>
        <name>ATP</name>
        <dbReference type="ChEBI" id="CHEBI:30616"/>
    </ligand>
</feature>
<feature type="binding site" evidence="1">
    <location>
        <position position="60"/>
    </location>
    <ligand>
        <name>ATP</name>
        <dbReference type="ChEBI" id="CHEBI:30616"/>
    </ligand>
</feature>
<feature type="binding site" evidence="1">
    <location>
        <position position="75"/>
    </location>
    <ligand>
        <name>UMP</name>
        <dbReference type="ChEBI" id="CHEBI:57865"/>
    </ligand>
</feature>
<feature type="binding site" evidence="1">
    <location>
        <begin position="136"/>
        <end position="143"/>
    </location>
    <ligand>
        <name>UMP</name>
        <dbReference type="ChEBI" id="CHEBI:57865"/>
    </ligand>
</feature>
<feature type="binding site" evidence="1">
    <location>
        <position position="164"/>
    </location>
    <ligand>
        <name>ATP</name>
        <dbReference type="ChEBI" id="CHEBI:30616"/>
    </ligand>
</feature>
<feature type="binding site" evidence="1">
    <location>
        <position position="170"/>
    </location>
    <ligand>
        <name>ATP</name>
        <dbReference type="ChEBI" id="CHEBI:30616"/>
    </ligand>
</feature>
<feature type="binding site" evidence="1">
    <location>
        <position position="173"/>
    </location>
    <ligand>
        <name>ATP</name>
        <dbReference type="ChEBI" id="CHEBI:30616"/>
    </ligand>
</feature>
<accession>Q2FZ22</accession>
<proteinExistence type="evidence at protein level"/>
<organism>
    <name type="scientific">Staphylococcus aureus (strain NCTC 8325 / PS 47)</name>
    <dbReference type="NCBI Taxonomy" id="93061"/>
    <lineage>
        <taxon>Bacteria</taxon>
        <taxon>Bacillati</taxon>
        <taxon>Bacillota</taxon>
        <taxon>Bacilli</taxon>
        <taxon>Bacillales</taxon>
        <taxon>Staphylococcaceae</taxon>
        <taxon>Staphylococcus</taxon>
    </lineage>
</organism>
<reference key="1">
    <citation type="book" date="2006" name="Gram positive pathogens, 2nd edition">
        <title>The Staphylococcus aureus NCTC 8325 genome.</title>
        <editorList>
            <person name="Fischetti V."/>
            <person name="Novick R."/>
            <person name="Ferretti J."/>
            <person name="Portnoy D."/>
            <person name="Rood J."/>
        </editorList>
        <authorList>
            <person name="Gillaspy A.F."/>
            <person name="Worrell V."/>
            <person name="Orvis J."/>
            <person name="Roe B.A."/>
            <person name="Dyer D.W."/>
            <person name="Iandolo J.J."/>
        </authorList>
    </citation>
    <scope>NUCLEOTIDE SEQUENCE [LARGE SCALE GENOMIC DNA]</scope>
    <source>
        <strain>NCTC 8325 / PS 47</strain>
    </source>
</reference>
<reference key="2">
    <citation type="journal article" date="2007" name="J. Biol. Chem.">
        <title>Regulatory mechanisms differ in UMP kinases from Gram-negative and Gram-positive bacteria.</title>
        <authorList>
            <person name="Evrin C."/>
            <person name="Straut M."/>
            <person name="Slavova-Azmanova N."/>
            <person name="Bucurenci N."/>
            <person name="Onu A."/>
            <person name="Assairi L."/>
            <person name="Ionescu M."/>
            <person name="Palibroda N."/>
            <person name="Barzu O."/>
            <person name="Gilles A.-M."/>
        </authorList>
    </citation>
    <scope>FUNCTION</scope>
    <scope>ACTIVITY REGULATION</scope>
    <scope>KINETIC PARAMETERS</scope>
    <scope>IDENTIFICATION BY MASS SPECTROMETRY</scope>
    <scope>SUBUNIT</scope>
</reference>